<proteinExistence type="inferred from homology"/>
<sequence length="167" mass="18919">MSKETPSEDDSRHRIVAVTLDEDSIGRSGPDIEHERAIAIYDLVEKNLFAPEGAEGGPFTLHIAITGNRLMFDIRREDGAPVVTHLLSLTPFRRIVKDYFMICDSYYQAIRTATPDKIEAIDMGRRGIHDEGSRTLQERLNGKVHVDFETARRLFTLISVLHWKGNA</sequence>
<organism>
    <name type="scientific">Nitrobacter winogradskyi (strain ATCC 25391 / DSM 10237 / CIP 104748 / NCIMB 11846 / Nb-255)</name>
    <dbReference type="NCBI Taxonomy" id="323098"/>
    <lineage>
        <taxon>Bacteria</taxon>
        <taxon>Pseudomonadati</taxon>
        <taxon>Pseudomonadota</taxon>
        <taxon>Alphaproteobacteria</taxon>
        <taxon>Hyphomicrobiales</taxon>
        <taxon>Nitrobacteraceae</taxon>
        <taxon>Nitrobacter</taxon>
    </lineage>
</organism>
<dbReference type="EMBL" id="CP000115">
    <property type="protein sequence ID" value="ABA03516.1"/>
    <property type="molecule type" value="Genomic_DNA"/>
</dbReference>
<dbReference type="RefSeq" id="WP_011313582.1">
    <property type="nucleotide sequence ID" value="NC_007406.1"/>
</dbReference>
<dbReference type="STRING" id="323098.Nwi_0248"/>
<dbReference type="KEGG" id="nwi:Nwi_0248"/>
<dbReference type="eggNOG" id="COG5328">
    <property type="taxonomic scope" value="Bacteria"/>
</dbReference>
<dbReference type="HOGENOM" id="CLU_112904_0_0_5"/>
<dbReference type="OrthoDB" id="9798434at2"/>
<dbReference type="Proteomes" id="UP000002531">
    <property type="component" value="Chromosome"/>
</dbReference>
<dbReference type="HAMAP" id="MF_00678">
    <property type="entry name" value="UPF0262"/>
    <property type="match status" value="1"/>
</dbReference>
<dbReference type="InterPro" id="IPR008321">
    <property type="entry name" value="UCP032146"/>
</dbReference>
<dbReference type="NCBIfam" id="NF002769">
    <property type="entry name" value="PRK02853.1"/>
    <property type="match status" value="1"/>
</dbReference>
<dbReference type="Pfam" id="PF06793">
    <property type="entry name" value="UPF0262"/>
    <property type="match status" value="1"/>
</dbReference>
<dbReference type="PIRSF" id="PIRSF032146">
    <property type="entry name" value="UCP032146"/>
    <property type="match status" value="1"/>
</dbReference>
<keyword id="KW-1185">Reference proteome</keyword>
<reference key="1">
    <citation type="journal article" date="2006" name="Appl. Environ. Microbiol.">
        <title>Genome sequence of the chemolithoautotrophic nitrite-oxidizing bacterium Nitrobacter winogradskyi Nb-255.</title>
        <authorList>
            <person name="Starkenburg S.R."/>
            <person name="Chain P.S.G."/>
            <person name="Sayavedra-Soto L.A."/>
            <person name="Hauser L."/>
            <person name="Land M.L."/>
            <person name="Larimer F.W."/>
            <person name="Malfatti S.A."/>
            <person name="Klotz M.G."/>
            <person name="Bottomley P.J."/>
            <person name="Arp D.J."/>
            <person name="Hickey W.J."/>
        </authorList>
    </citation>
    <scope>NUCLEOTIDE SEQUENCE [LARGE SCALE GENOMIC DNA]</scope>
    <source>
        <strain>ATCC 25391 / DSM 10237 / CIP 104748 / NCIMB 11846 / Nb-255</strain>
    </source>
</reference>
<feature type="chain" id="PRO_0000314201" description="UPF0262 protein Nwi_0248">
    <location>
        <begin position="1"/>
        <end position="167"/>
    </location>
</feature>
<evidence type="ECO:0000255" key="1">
    <source>
        <dbReference type="HAMAP-Rule" id="MF_00678"/>
    </source>
</evidence>
<protein>
    <recommendedName>
        <fullName evidence="1">UPF0262 protein Nwi_0248</fullName>
    </recommendedName>
</protein>
<gene>
    <name type="ordered locus">Nwi_0248</name>
</gene>
<comment type="similarity">
    <text evidence="1">Belongs to the UPF0262 family.</text>
</comment>
<name>Y248_NITWN</name>
<accession>Q3SW25</accession>